<organism>
    <name type="scientific">Yersinia pestis bv. Antiqua (strain Nepal516)</name>
    <dbReference type="NCBI Taxonomy" id="377628"/>
    <lineage>
        <taxon>Bacteria</taxon>
        <taxon>Pseudomonadati</taxon>
        <taxon>Pseudomonadota</taxon>
        <taxon>Gammaproteobacteria</taxon>
        <taxon>Enterobacterales</taxon>
        <taxon>Yersiniaceae</taxon>
        <taxon>Yersinia</taxon>
    </lineage>
</organism>
<accession>Q1CFZ1</accession>
<accession>C4GWC5</accession>
<keyword id="KW-0489">Methyltransferase</keyword>
<keyword id="KW-0949">S-adenosyl-L-methionine</keyword>
<keyword id="KW-0808">Transferase</keyword>
<keyword id="KW-0831">Ubiquinone biosynthesis</keyword>
<comment type="function">
    <text evidence="1">O-methyltransferase that catalyzes the 2 O-methylation steps in the ubiquinone biosynthetic pathway.</text>
</comment>
<comment type="catalytic activity">
    <reaction evidence="1">
        <text>a 3-demethylubiquinol + S-adenosyl-L-methionine = a ubiquinol + S-adenosyl-L-homocysteine + H(+)</text>
        <dbReference type="Rhea" id="RHEA:44380"/>
        <dbReference type="Rhea" id="RHEA-COMP:9566"/>
        <dbReference type="Rhea" id="RHEA-COMP:10914"/>
        <dbReference type="ChEBI" id="CHEBI:15378"/>
        <dbReference type="ChEBI" id="CHEBI:17976"/>
        <dbReference type="ChEBI" id="CHEBI:57856"/>
        <dbReference type="ChEBI" id="CHEBI:59789"/>
        <dbReference type="ChEBI" id="CHEBI:84422"/>
        <dbReference type="EC" id="2.1.1.64"/>
    </reaction>
</comment>
<comment type="catalytic activity">
    <reaction evidence="1">
        <text>a 3-(all-trans-polyprenyl)benzene-1,2-diol + S-adenosyl-L-methionine = a 2-methoxy-6-(all-trans-polyprenyl)phenol + S-adenosyl-L-homocysteine + H(+)</text>
        <dbReference type="Rhea" id="RHEA:31411"/>
        <dbReference type="Rhea" id="RHEA-COMP:9550"/>
        <dbReference type="Rhea" id="RHEA-COMP:9551"/>
        <dbReference type="ChEBI" id="CHEBI:15378"/>
        <dbReference type="ChEBI" id="CHEBI:57856"/>
        <dbReference type="ChEBI" id="CHEBI:59789"/>
        <dbReference type="ChEBI" id="CHEBI:62729"/>
        <dbReference type="ChEBI" id="CHEBI:62731"/>
        <dbReference type="EC" id="2.1.1.222"/>
    </reaction>
</comment>
<comment type="pathway">
    <text evidence="1">Cofactor biosynthesis; ubiquinone biosynthesis.</text>
</comment>
<comment type="similarity">
    <text evidence="1">Belongs to the methyltransferase superfamily. UbiG/COQ3 family.</text>
</comment>
<proteinExistence type="inferred from homology"/>
<evidence type="ECO:0000255" key="1">
    <source>
        <dbReference type="HAMAP-Rule" id="MF_00472"/>
    </source>
</evidence>
<protein>
    <recommendedName>
        <fullName evidence="1">Ubiquinone biosynthesis O-methyltransferase</fullName>
    </recommendedName>
    <alternativeName>
        <fullName evidence="1">2-polyprenyl-6-hydroxyphenol methylase</fullName>
        <ecNumber evidence="1">2.1.1.222</ecNumber>
    </alternativeName>
    <alternativeName>
        <fullName evidence="1">3-demethylubiquinone 3-O-methyltransferase</fullName>
        <ecNumber evidence="1">2.1.1.64</ecNumber>
    </alternativeName>
</protein>
<name>UBIG_YERPN</name>
<sequence length="242" mass="27466">MRAKTTSRHHNVDEQEIAKFEAVASRWWDLEGEFKPLHRINPLRLNYILQRSGGIFEKKVLDVGCGGGILAESMAREGAQVTGLDMGYEPLQVARLHALETGVKLEYVQETVENHAQQHPQHYDVVTCMEMLEHVPDPASVVRACAQLVKPGGHVFFSTINRNTKSWLMAVVGAEYLLKMVPKGTHDAKKFIRPSELIGWVDQTPLLERHIIGLHYNPITDHFKLGRNVDVNYMVHTQRDSE</sequence>
<reference key="1">
    <citation type="journal article" date="2006" name="J. Bacteriol.">
        <title>Complete genome sequence of Yersinia pestis strains Antiqua and Nepal516: evidence of gene reduction in an emerging pathogen.</title>
        <authorList>
            <person name="Chain P.S.G."/>
            <person name="Hu P."/>
            <person name="Malfatti S.A."/>
            <person name="Radnedge L."/>
            <person name="Larimer F."/>
            <person name="Vergez L.M."/>
            <person name="Worsham P."/>
            <person name="Chu M.C."/>
            <person name="Andersen G.L."/>
        </authorList>
    </citation>
    <scope>NUCLEOTIDE SEQUENCE [LARGE SCALE GENOMIC DNA]</scope>
    <source>
        <strain>Nepal516</strain>
    </source>
</reference>
<reference key="2">
    <citation type="submission" date="2009-04" db="EMBL/GenBank/DDBJ databases">
        <title>Yersinia pestis Nepal516A whole genome shotgun sequencing project.</title>
        <authorList>
            <person name="Plunkett G. III"/>
            <person name="Anderson B.D."/>
            <person name="Baumler D.J."/>
            <person name="Burland V."/>
            <person name="Cabot E.L."/>
            <person name="Glasner J.D."/>
            <person name="Mau B."/>
            <person name="Neeno-Eckwall E."/>
            <person name="Perna N.T."/>
            <person name="Munk A.C."/>
            <person name="Tapia R."/>
            <person name="Green L.D."/>
            <person name="Rogers Y.C."/>
            <person name="Detter J.C."/>
            <person name="Bruce D.C."/>
            <person name="Brettin T.S."/>
        </authorList>
    </citation>
    <scope>NUCLEOTIDE SEQUENCE [LARGE SCALE GENOMIC DNA]</scope>
    <source>
        <strain>Nepal516</strain>
    </source>
</reference>
<dbReference type="EC" id="2.1.1.222" evidence="1"/>
<dbReference type="EC" id="2.1.1.64" evidence="1"/>
<dbReference type="EMBL" id="CP000305">
    <property type="protein sequence ID" value="ABG19089.1"/>
    <property type="molecule type" value="Genomic_DNA"/>
</dbReference>
<dbReference type="EMBL" id="ACNQ01000017">
    <property type="protein sequence ID" value="EEO75225.1"/>
    <property type="molecule type" value="Genomic_DNA"/>
</dbReference>
<dbReference type="RefSeq" id="WP_002210820.1">
    <property type="nucleotide sequence ID" value="NZ_ACNQ01000017.1"/>
</dbReference>
<dbReference type="SMR" id="Q1CFZ1"/>
<dbReference type="GeneID" id="57977354"/>
<dbReference type="KEGG" id="ypn:YPN_2762"/>
<dbReference type="HOGENOM" id="CLU_042432_5_0_6"/>
<dbReference type="UniPathway" id="UPA00232"/>
<dbReference type="Proteomes" id="UP000008936">
    <property type="component" value="Chromosome"/>
</dbReference>
<dbReference type="GO" id="GO:0102208">
    <property type="term" value="F:2-polyprenyl-6-hydroxyphenol methylase activity"/>
    <property type="evidence" value="ECO:0007669"/>
    <property type="project" value="UniProtKB-EC"/>
</dbReference>
<dbReference type="GO" id="GO:0061542">
    <property type="term" value="F:3-demethylubiquinol 3-O-methyltransferase activity"/>
    <property type="evidence" value="ECO:0007669"/>
    <property type="project" value="UniProtKB-UniRule"/>
</dbReference>
<dbReference type="GO" id="GO:0010420">
    <property type="term" value="F:polyprenyldihydroxybenzoate methyltransferase activity"/>
    <property type="evidence" value="ECO:0007669"/>
    <property type="project" value="InterPro"/>
</dbReference>
<dbReference type="GO" id="GO:0032259">
    <property type="term" value="P:methylation"/>
    <property type="evidence" value="ECO:0007669"/>
    <property type="project" value="UniProtKB-KW"/>
</dbReference>
<dbReference type="CDD" id="cd02440">
    <property type="entry name" value="AdoMet_MTases"/>
    <property type="match status" value="1"/>
</dbReference>
<dbReference type="FunFam" id="3.40.50.150:FF:000028">
    <property type="entry name" value="Ubiquinone biosynthesis O-methyltransferase"/>
    <property type="match status" value="1"/>
</dbReference>
<dbReference type="Gene3D" id="3.40.50.150">
    <property type="entry name" value="Vaccinia Virus protein VP39"/>
    <property type="match status" value="1"/>
</dbReference>
<dbReference type="HAMAP" id="MF_00472">
    <property type="entry name" value="UbiG"/>
    <property type="match status" value="1"/>
</dbReference>
<dbReference type="InterPro" id="IPR029063">
    <property type="entry name" value="SAM-dependent_MTases_sf"/>
</dbReference>
<dbReference type="InterPro" id="IPR010233">
    <property type="entry name" value="UbiG_MeTrfase"/>
</dbReference>
<dbReference type="NCBIfam" id="TIGR01983">
    <property type="entry name" value="UbiG"/>
    <property type="match status" value="1"/>
</dbReference>
<dbReference type="PANTHER" id="PTHR43464">
    <property type="entry name" value="METHYLTRANSFERASE"/>
    <property type="match status" value="1"/>
</dbReference>
<dbReference type="PANTHER" id="PTHR43464:SF19">
    <property type="entry name" value="UBIQUINONE BIOSYNTHESIS O-METHYLTRANSFERASE, MITOCHONDRIAL"/>
    <property type="match status" value="1"/>
</dbReference>
<dbReference type="Pfam" id="PF13489">
    <property type="entry name" value="Methyltransf_23"/>
    <property type="match status" value="1"/>
</dbReference>
<dbReference type="SUPFAM" id="SSF53335">
    <property type="entry name" value="S-adenosyl-L-methionine-dependent methyltransferases"/>
    <property type="match status" value="1"/>
</dbReference>
<gene>
    <name evidence="1" type="primary">ubiG</name>
    <name type="ordered locus">YPN_2762</name>
    <name type="ORF">YP516_3122</name>
</gene>
<feature type="chain" id="PRO_1000013934" description="Ubiquinone biosynthesis O-methyltransferase">
    <location>
        <begin position="1"/>
        <end position="242"/>
    </location>
</feature>
<feature type="binding site" evidence="1">
    <location>
        <position position="44"/>
    </location>
    <ligand>
        <name>S-adenosyl-L-methionine</name>
        <dbReference type="ChEBI" id="CHEBI:59789"/>
    </ligand>
</feature>
<feature type="binding site" evidence="1">
    <location>
        <position position="64"/>
    </location>
    <ligand>
        <name>S-adenosyl-L-methionine</name>
        <dbReference type="ChEBI" id="CHEBI:59789"/>
    </ligand>
</feature>
<feature type="binding site" evidence="1">
    <location>
        <position position="85"/>
    </location>
    <ligand>
        <name>S-adenosyl-L-methionine</name>
        <dbReference type="ChEBI" id="CHEBI:59789"/>
    </ligand>
</feature>
<feature type="binding site" evidence="1">
    <location>
        <position position="129"/>
    </location>
    <ligand>
        <name>S-adenosyl-L-methionine</name>
        <dbReference type="ChEBI" id="CHEBI:59789"/>
    </ligand>
</feature>